<feature type="chain" id="PRO_0000367843" description="THAP domain-containing protein 1">
    <location>
        <begin position="1"/>
        <end position="225"/>
    </location>
</feature>
<feature type="zinc finger region" description="THAP-type" evidence="3">
    <location>
        <begin position="5"/>
        <end position="57"/>
    </location>
</feature>
<feature type="coiled-coil region" evidence="2">
    <location>
        <begin position="149"/>
        <end position="196"/>
    </location>
</feature>
<proteinExistence type="evidence at transcript level"/>
<keyword id="KW-0131">Cell cycle</keyword>
<keyword id="KW-0175">Coiled coil</keyword>
<keyword id="KW-0238">DNA-binding</keyword>
<keyword id="KW-0479">Metal-binding</keyword>
<keyword id="KW-0539">Nucleus</keyword>
<keyword id="KW-1185">Reference proteome</keyword>
<keyword id="KW-0804">Transcription</keyword>
<keyword id="KW-0805">Transcription regulation</keyword>
<keyword id="KW-0862">Zinc</keyword>
<keyword id="KW-0863">Zinc-finger</keyword>
<dbReference type="EMBL" id="EH532428">
    <property type="status" value="NOT_ANNOTATED_CDS"/>
    <property type="molecule type" value="mRNA"/>
</dbReference>
<dbReference type="EMBL" id="BC116602">
    <property type="protein sequence ID" value="AAI16603.1"/>
    <property type="status" value="ALT_SEQ"/>
    <property type="molecule type" value="mRNA"/>
</dbReference>
<dbReference type="RefSeq" id="NP_001038749.1">
    <property type="nucleotide sequence ID" value="NM_001045284.1"/>
</dbReference>
<dbReference type="RefSeq" id="NP_001410789.1">
    <property type="nucleotide sequence ID" value="NM_001423860.1"/>
</dbReference>
<dbReference type="SMR" id="Q1JPT7"/>
<dbReference type="FunCoup" id="Q1JPT7">
    <property type="interactions" value="1572"/>
</dbReference>
<dbReference type="STRING" id="7955.ENSDARP00000153042"/>
<dbReference type="PaxDb" id="7955-ENSDARP00000076434"/>
<dbReference type="Ensembl" id="ENSDART00000181692">
    <property type="protein sequence ID" value="ENSDARP00000153042"/>
    <property type="gene ID" value="ENSDARG00000059020"/>
</dbReference>
<dbReference type="GeneID" id="692315"/>
<dbReference type="AGR" id="ZFIN:ZDB-GENE-060519-9"/>
<dbReference type="ZFIN" id="ZDB-GENE-060519-9">
    <property type="gene designation" value="thap1"/>
</dbReference>
<dbReference type="eggNOG" id="KOG1721">
    <property type="taxonomic scope" value="Eukaryota"/>
</dbReference>
<dbReference type="HOGENOM" id="CLU_076186_2_1_1"/>
<dbReference type="InParanoid" id="Q1JPT7"/>
<dbReference type="OMA" id="TKDCFKR"/>
<dbReference type="OrthoDB" id="9867479at2759"/>
<dbReference type="PhylomeDB" id="Q1JPT7"/>
<dbReference type="TreeFam" id="TF330127"/>
<dbReference type="PRO" id="PR:Q1JPT7"/>
<dbReference type="Proteomes" id="UP000000437">
    <property type="component" value="Chromosome 5"/>
</dbReference>
<dbReference type="Bgee" id="ENSDARG00000059020">
    <property type="expression patterns" value="Expressed in muscle tissue and 21 other cell types or tissues"/>
</dbReference>
<dbReference type="ExpressionAtlas" id="Q1JPT7">
    <property type="expression patterns" value="baseline and differential"/>
</dbReference>
<dbReference type="GO" id="GO:0005654">
    <property type="term" value="C:nucleoplasm"/>
    <property type="evidence" value="ECO:0007669"/>
    <property type="project" value="UniProtKB-SubCell"/>
</dbReference>
<dbReference type="GO" id="GO:0005634">
    <property type="term" value="C:nucleus"/>
    <property type="evidence" value="ECO:0000318"/>
    <property type="project" value="GO_Central"/>
</dbReference>
<dbReference type="GO" id="GO:0003700">
    <property type="term" value="F:DNA-binding transcription factor activity"/>
    <property type="evidence" value="ECO:0000318"/>
    <property type="project" value="GO_Central"/>
</dbReference>
<dbReference type="GO" id="GO:0000978">
    <property type="term" value="F:RNA polymerase II cis-regulatory region sequence-specific DNA binding"/>
    <property type="evidence" value="ECO:0000318"/>
    <property type="project" value="GO_Central"/>
</dbReference>
<dbReference type="GO" id="GO:0043565">
    <property type="term" value="F:sequence-specific DNA binding"/>
    <property type="evidence" value="ECO:0000250"/>
    <property type="project" value="UniProtKB"/>
</dbReference>
<dbReference type="GO" id="GO:0008270">
    <property type="term" value="F:zinc ion binding"/>
    <property type="evidence" value="ECO:0007669"/>
    <property type="project" value="UniProtKB-KW"/>
</dbReference>
<dbReference type="GO" id="GO:0006357">
    <property type="term" value="P:regulation of transcription by RNA polymerase II"/>
    <property type="evidence" value="ECO:0000318"/>
    <property type="project" value="GO_Central"/>
</dbReference>
<dbReference type="Gene3D" id="6.20.210.20">
    <property type="entry name" value="THAP domain"/>
    <property type="match status" value="1"/>
</dbReference>
<dbReference type="InterPro" id="IPR026516">
    <property type="entry name" value="THAP1/10"/>
</dbReference>
<dbReference type="InterPro" id="IPR006612">
    <property type="entry name" value="THAP_Znf"/>
</dbReference>
<dbReference type="InterPro" id="IPR038441">
    <property type="entry name" value="THAP_Znf_sf"/>
</dbReference>
<dbReference type="PANTHER" id="PTHR46600:SF7">
    <property type="entry name" value="SI:DKEY-228B2.6-RELATED"/>
    <property type="match status" value="1"/>
</dbReference>
<dbReference type="PANTHER" id="PTHR46600">
    <property type="entry name" value="THAP DOMAIN-CONTAINING"/>
    <property type="match status" value="1"/>
</dbReference>
<dbReference type="Pfam" id="PF05485">
    <property type="entry name" value="THAP"/>
    <property type="match status" value="1"/>
</dbReference>
<dbReference type="SMART" id="SM00692">
    <property type="entry name" value="DM3"/>
    <property type="match status" value="1"/>
</dbReference>
<dbReference type="SMART" id="SM00980">
    <property type="entry name" value="THAP"/>
    <property type="match status" value="1"/>
</dbReference>
<dbReference type="SUPFAM" id="SSF57716">
    <property type="entry name" value="Glucocorticoid receptor-like (DNA-binding domain)"/>
    <property type="match status" value="1"/>
</dbReference>
<dbReference type="PROSITE" id="PS50950">
    <property type="entry name" value="ZF_THAP"/>
    <property type="match status" value="1"/>
</dbReference>
<evidence type="ECO:0000250" key="1"/>
<evidence type="ECO:0000255" key="2"/>
<evidence type="ECO:0000255" key="3">
    <source>
        <dbReference type="PROSITE-ProRule" id="PRU00309"/>
    </source>
</evidence>
<evidence type="ECO:0000305" key="4"/>
<accession>Q1JPT7</accession>
<reference key="1">
    <citation type="submission" date="2007-01" db="EMBL/GenBank/DDBJ databases">
        <title>Genome institute of Singapore, zebrafish transcriptome characterization.</title>
        <authorList>
            <person name="Mathavan S."/>
            <person name="Yao F."/>
            <person name="Wong E."/>
            <person name="Thoreau H."/>
            <person name="Nayudu M."/>
            <person name="Govindarajan K.R."/>
            <person name="Ruan Y."/>
            <person name="Wei C."/>
        </authorList>
    </citation>
    <scope>NUCLEOTIDE SEQUENCE [LARGE SCALE MRNA]</scope>
    <source>
        <tissue>Intestine</tissue>
    </source>
</reference>
<reference key="2">
    <citation type="submission" date="2006-05" db="EMBL/GenBank/DDBJ databases">
        <authorList>
            <consortium name="NIH - Zebrafish Gene Collection (ZGC) project"/>
        </authorList>
    </citation>
    <scope>NUCLEOTIDE SEQUENCE [LARGE SCALE MRNA]</scope>
    <source>
        <tissue>Heart</tissue>
    </source>
</reference>
<gene>
    <name type="primary">thap1</name>
    <name type="ORF">zgc:136597</name>
</gene>
<name>THAP1_DANRE</name>
<comment type="function">
    <text evidence="1">DNA-binding transcription regulator that regulates endothelial cell proliferation and G1/S cell-cycle progression. Specifically binds the 5'-[AT]NTNN[GT]GGCA[AGT]-3' core DNA sequence and acts by modulating expression of pRB-E2F cell-cycle target genes (By similarity).</text>
</comment>
<comment type="subcellular location">
    <subcellularLocation>
        <location evidence="1">Nucleus</location>
        <location evidence="1">Nucleoplasm</location>
    </subcellularLocation>
</comment>
<comment type="similarity">
    <text evidence="4">Belongs to the THAP1 family.</text>
</comment>
<comment type="sequence caution" evidence="4">
    <conflict type="miscellaneous discrepancy">
        <sequence resource="EMBL-CDS" id="AAI16603"/>
    </conflict>
    <text>Contaminating sequence. Sequence of unknown origin.</text>
</comment>
<protein>
    <recommendedName>
        <fullName>THAP domain-containing protein 1</fullName>
    </recommendedName>
</protein>
<organism>
    <name type="scientific">Danio rerio</name>
    <name type="common">Zebrafish</name>
    <name type="synonym">Brachydanio rerio</name>
    <dbReference type="NCBI Taxonomy" id="7955"/>
    <lineage>
        <taxon>Eukaryota</taxon>
        <taxon>Metazoa</taxon>
        <taxon>Chordata</taxon>
        <taxon>Craniata</taxon>
        <taxon>Vertebrata</taxon>
        <taxon>Euteleostomi</taxon>
        <taxon>Actinopterygii</taxon>
        <taxon>Neopterygii</taxon>
        <taxon>Teleostei</taxon>
        <taxon>Ostariophysi</taxon>
        <taxon>Cypriniformes</taxon>
        <taxon>Danionidae</taxon>
        <taxon>Danioninae</taxon>
        <taxon>Danio</taxon>
    </lineage>
</organism>
<sequence length="225" mass="25707">MVQSCSAYGCKNRYQKDRNISFHKFPLARPEVCVQWVSAMSRRNFKPTKYSNICSQHFTSDCFKQECNNRVLKDNAVPSLFTLQTQDPFSADVCFPLNVCATAEPLSECFPEQCGLPDGQEAGAVSCPEQCVPPGGQEAGAVSCDHNYTLEDCVQQKRRVQRLQEQMEKLRRRMKTLQQKCRRQERQLERLRANRGPAPLGDRYVILPRELYEELQGVETIGAVH</sequence>